<accession>Q77IS8</accession>
<proteinExistence type="evidence at protein level"/>
<name>NCAP_MUMPJ</name>
<dbReference type="EMBL" id="AF338106">
    <property type="protein sequence ID" value="AAK83227.1"/>
    <property type="molecule type" value="Genomic_RNA"/>
</dbReference>
<dbReference type="PDB" id="7EWQ">
    <property type="method" value="EM"/>
    <property type="resolution" value="3.50 A"/>
    <property type="chains" value="A=1-549"/>
</dbReference>
<dbReference type="PDB" id="7EXA">
    <property type="method" value="EM"/>
    <property type="resolution" value="2.90 A"/>
    <property type="chains" value="A=1-549"/>
</dbReference>
<dbReference type="PDBsum" id="7EWQ"/>
<dbReference type="PDBsum" id="7EXA"/>
<dbReference type="EMDB" id="EMD-31361"/>
<dbReference type="EMDB" id="EMD-31367"/>
<dbReference type="SMR" id="Q77IS8"/>
<dbReference type="IntAct" id="Q77IS8">
    <property type="interactions" value="2"/>
</dbReference>
<dbReference type="Proteomes" id="UP000163835">
    <property type="component" value="Genome"/>
</dbReference>
<dbReference type="GO" id="GO:0019029">
    <property type="term" value="C:helical viral capsid"/>
    <property type="evidence" value="ECO:0007669"/>
    <property type="project" value="UniProtKB-KW"/>
</dbReference>
<dbReference type="GO" id="GO:0030430">
    <property type="term" value="C:host cell cytoplasm"/>
    <property type="evidence" value="ECO:0007669"/>
    <property type="project" value="UniProtKB-SubCell"/>
</dbReference>
<dbReference type="GO" id="GO:1990904">
    <property type="term" value="C:ribonucleoprotein complex"/>
    <property type="evidence" value="ECO:0007669"/>
    <property type="project" value="UniProtKB-KW"/>
</dbReference>
<dbReference type="GO" id="GO:0019013">
    <property type="term" value="C:viral nucleocapsid"/>
    <property type="evidence" value="ECO:0007669"/>
    <property type="project" value="UniProtKB-KW"/>
</dbReference>
<dbReference type="GO" id="GO:0003723">
    <property type="term" value="F:RNA binding"/>
    <property type="evidence" value="ECO:0007669"/>
    <property type="project" value="UniProtKB-KW"/>
</dbReference>
<dbReference type="GO" id="GO:0005198">
    <property type="term" value="F:structural molecule activity"/>
    <property type="evidence" value="ECO:0007669"/>
    <property type="project" value="InterPro"/>
</dbReference>
<dbReference type="InterPro" id="IPR002021">
    <property type="entry name" value="Paramyx_ncap"/>
</dbReference>
<dbReference type="Pfam" id="PF00973">
    <property type="entry name" value="Paramyxo_ncap"/>
    <property type="match status" value="1"/>
</dbReference>
<comment type="function">
    <text evidence="1 3">Forms the helical nucleocapsid (NC) with 12.71 N subunits per helical turn and a rise of 5.3 Angstrom per N subunit, protecting the genome from nucleases (By similarity). The encapsidated genomic RNA serves as template for transcription and replication; encapsidation by N is coupled to RNA synthesis (By similarity). Forms the encapsidation complex with the phosphoprotein protein P (By similarity). Before encapsidation, the newly synthesized free N protein, so-called N0, is chaperoned by P (By similarity).</text>
</comment>
<comment type="subunit">
    <text evidence="1 3 4">Homomultimer; forms the nucleocapsid (By similarity). Binds to the viral genomic RNA (By similarity). N0 interacts with the phosphoprotein (via N-terminus); this interaction allows P to chaperon N0 to avoid N polymerization before encapsidation (By similarity). Interacts (via N-terminus) as N-RNA template with the phosphoprotein (via C-terminus); this interaction positions the polymerase on the template (By similarity).</text>
</comment>
<comment type="interaction">
    <interactant intactId="EBI-40205126">
        <id>Q77IS8</id>
    </interactant>
    <interactant intactId="EBI-297683">
        <id>Q96CW1</id>
        <label>AP2M1</label>
    </interactant>
    <organismsDiffer>true</organismsDiffer>
    <experiments>2</experiments>
</comment>
<comment type="subcellular location">
    <subcellularLocation>
        <location evidence="6">Virion</location>
    </subcellularLocation>
    <subcellularLocation>
        <location evidence="1">Host cytoplasm</location>
    </subcellularLocation>
    <text evidence="1">Found in cytoplasmic viral factories.</text>
</comment>
<comment type="domain">
    <text evidence="3">Ncore is globular and carries the regions required for self-assembly and RNA-binding. Ntail is an intrinsically disordered monomeric domain in the C-terminus.</text>
</comment>
<comment type="similarity">
    <text evidence="7">Belongs to the paramyxoviruses nucleocapsid family.</text>
</comment>
<keyword id="KW-0002">3D-structure</keyword>
<keyword id="KW-0167">Capsid protein</keyword>
<keyword id="KW-1139">Helical capsid protein</keyword>
<keyword id="KW-1035">Host cytoplasm</keyword>
<keyword id="KW-0597">Phosphoprotein</keyword>
<keyword id="KW-0687">Ribonucleoprotein</keyword>
<keyword id="KW-0694">RNA-binding</keyword>
<keyword id="KW-0543">Viral nucleoprotein</keyword>
<keyword id="KW-0946">Virion</keyword>
<organismHost>
    <name type="scientific">Homo sapiens</name>
    <name type="common">Human</name>
    <dbReference type="NCBI Taxonomy" id="9606"/>
</organismHost>
<reference key="1">
    <citation type="journal article" date="2002" name="Virology">
        <title>Sequence diversity of Jeryl Lynn strain of mumps virus: quantitative mutant analysis for vaccine quality control.</title>
        <authorList>
            <person name="Amexis G."/>
            <person name="Rubin S."/>
            <person name="Chizhikov V."/>
            <person name="Pelloquin F."/>
            <person name="Carbone K."/>
            <person name="Chumakov K."/>
        </authorList>
    </citation>
    <scope>NUCLEOTIDE SEQUENCE [GENOMIC RNA]</scope>
    <source>
        <strain>Jeryl-Lynn</strain>
    </source>
</reference>
<reference key="2">
    <citation type="journal article" date="2004" name="J. Virol.">
        <title>Characterization of nucleocapsid binding by the measles virus and mumps virus phosphoproteins.</title>
        <authorList>
            <person name="Kingston R.L."/>
            <person name="Baase W.A."/>
            <person name="Gay L.S."/>
        </authorList>
    </citation>
    <scope>INTERACTION WITH P PROTEIN</scope>
</reference>
<reference key="3">
    <citation type="journal article" date="2016" name="Virol. J.">
        <title>Identification of mumps virus protein and lipid composition by mass spectrometry.</title>
        <authorList>
            <person name="Brgles M."/>
            <person name="Bonta M."/>
            <person name="Santak M."/>
            <person name="Jagusic M."/>
            <person name="Forcic D."/>
            <person name="Halassy B."/>
            <person name="Allmaier G."/>
            <person name="Marchetti-Deschmann M."/>
        </authorList>
    </citation>
    <scope>IDENTIFICATION BY MASS SPECTROMETRY</scope>
    <scope>SUBCELLULAR LOCATION</scope>
    <source>
        <strain>Jeryl-Lynn 5</strain>
    </source>
</reference>
<reference evidence="8 9" key="4">
    <citation type="journal article" date="2021" name="Commun. Biol.">
        <title>Structural plasticity of mumps virus nucleocapsids with cryo-EM structures.</title>
        <authorList>
            <person name="Shan H."/>
            <person name="Su X."/>
            <person name="Li T."/>
            <person name="Qin Y."/>
            <person name="Zhang N."/>
            <person name="Yang L."/>
            <person name="Ma L."/>
            <person name="Bai Y."/>
            <person name="Qi L."/>
            <person name="Liu Y."/>
            <person name="Shen Q.T."/>
        </authorList>
    </citation>
    <scope>STRUCTURE BY ELECTRON MICROSCOPY (2.90 ANGSTROMS)</scope>
</reference>
<organism>
    <name type="scientific">Mumps virus genotype A (strain Jeryl-Lynn)</name>
    <name type="common">MuV</name>
    <dbReference type="NCBI Taxonomy" id="11168"/>
    <lineage>
        <taxon>Viruses</taxon>
        <taxon>Riboviria</taxon>
        <taxon>Orthornavirae</taxon>
        <taxon>Negarnaviricota</taxon>
        <taxon>Haploviricotina</taxon>
        <taxon>Monjiviricetes</taxon>
        <taxon>Mononegavirales</taxon>
        <taxon>Paramyxoviridae</taxon>
        <taxon>Rubulavirinae</taxon>
        <taxon>Orthorubulavirus</taxon>
        <taxon>Orthorubulavirus parotitidis</taxon>
        <taxon>Mumps orthorubulavirus</taxon>
    </lineage>
</organism>
<feature type="chain" id="PRO_0000142660" description="Nucleoprotein">
    <location>
        <begin position="1"/>
        <end position="549"/>
    </location>
</feature>
<feature type="region of interest" description="Ncore" evidence="3">
    <location>
        <begin position="1"/>
        <end position="404"/>
    </location>
</feature>
<feature type="region of interest" description="P protein-binding">
    <location>
        <begin position="1"/>
        <end position="398"/>
    </location>
</feature>
<feature type="region of interest" description="Ntail" evidence="3">
    <location>
        <begin position="405"/>
        <end position="549"/>
    </location>
</feature>
<feature type="region of interest" description="Disordered" evidence="5">
    <location>
        <begin position="517"/>
        <end position="549"/>
    </location>
</feature>
<feature type="compositionally biased region" description="Polar residues" evidence="5">
    <location>
        <begin position="531"/>
        <end position="542"/>
    </location>
</feature>
<feature type="binding site" evidence="2">
    <location>
        <position position="180"/>
    </location>
    <ligand>
        <name>RNA</name>
        <dbReference type="ChEBI" id="CHEBI:33697"/>
    </ligand>
</feature>
<feature type="binding site" evidence="2">
    <location>
        <position position="195"/>
    </location>
    <ligand>
        <name>RNA</name>
        <dbReference type="ChEBI" id="CHEBI:33697"/>
    </ligand>
</feature>
<feature type="binding site" evidence="2">
    <location>
        <position position="260"/>
    </location>
    <ligand>
        <name>RNA</name>
        <dbReference type="ChEBI" id="CHEBI:33697"/>
    </ligand>
</feature>
<feature type="binding site" evidence="2">
    <location>
        <position position="350"/>
    </location>
    <ligand>
        <name>RNA</name>
        <dbReference type="ChEBI" id="CHEBI:33697"/>
    </ligand>
</feature>
<feature type="binding site" evidence="2">
    <location>
        <position position="354"/>
    </location>
    <ligand>
        <name>RNA</name>
        <dbReference type="ChEBI" id="CHEBI:33697"/>
    </ligand>
</feature>
<feature type="modified residue" description="Phosphoserine" evidence="4">
    <location>
        <position position="439"/>
    </location>
</feature>
<feature type="helix" evidence="10">
    <location>
        <begin position="3"/>
        <end position="17"/>
    </location>
</feature>
<feature type="helix" evidence="10">
    <location>
        <begin position="18"/>
        <end position="20"/>
    </location>
</feature>
<feature type="strand" evidence="10">
    <location>
        <begin position="36"/>
        <end position="42"/>
    </location>
</feature>
<feature type="helix" evidence="10">
    <location>
        <begin position="45"/>
        <end position="60"/>
    </location>
</feature>
<feature type="helix" evidence="10">
    <location>
        <begin position="66"/>
        <end position="76"/>
    </location>
</feature>
<feature type="helix" evidence="10">
    <location>
        <begin position="84"/>
        <end position="91"/>
    </location>
</feature>
<feature type="strand" evidence="10">
    <location>
        <begin position="100"/>
        <end position="107"/>
    </location>
</feature>
<feature type="strand" evidence="10">
    <location>
        <begin position="114"/>
        <end position="116"/>
    </location>
</feature>
<feature type="strand" evidence="10">
    <location>
        <begin position="118"/>
        <end position="120"/>
    </location>
</feature>
<feature type="helix" evidence="10">
    <location>
        <begin position="124"/>
        <end position="133"/>
    </location>
</feature>
<feature type="strand" evidence="10">
    <location>
        <begin position="139"/>
        <end position="141"/>
    </location>
</feature>
<feature type="helix" evidence="10">
    <location>
        <begin position="142"/>
        <end position="144"/>
    </location>
</feature>
<feature type="strand" evidence="10">
    <location>
        <begin position="145"/>
        <end position="149"/>
    </location>
</feature>
<feature type="helix" evidence="10">
    <location>
        <begin position="151"/>
        <end position="154"/>
    </location>
</feature>
<feature type="helix" evidence="10">
    <location>
        <begin position="160"/>
        <end position="179"/>
    </location>
</feature>
<feature type="turn" evidence="10">
    <location>
        <begin position="180"/>
        <end position="183"/>
    </location>
</feature>
<feature type="helix" evidence="10">
    <location>
        <begin position="190"/>
        <end position="201"/>
    </location>
</feature>
<feature type="helix" evidence="10">
    <location>
        <begin position="207"/>
        <end position="209"/>
    </location>
</feature>
<feature type="helix" evidence="10">
    <location>
        <begin position="213"/>
        <end position="224"/>
    </location>
</feature>
<feature type="helix" evidence="10">
    <location>
        <begin position="228"/>
        <end position="240"/>
    </location>
</feature>
<feature type="helix" evidence="10">
    <location>
        <begin position="249"/>
        <end position="261"/>
    </location>
</feature>
<feature type="helix" evidence="10">
    <location>
        <begin position="267"/>
        <end position="276"/>
    </location>
</feature>
<feature type="helix" evidence="10">
    <location>
        <begin position="283"/>
        <end position="286"/>
    </location>
</feature>
<feature type="helix" evidence="10">
    <location>
        <begin position="290"/>
        <end position="306"/>
    </location>
</feature>
<feature type="helix" evidence="10">
    <location>
        <begin position="308"/>
        <end position="312"/>
    </location>
</feature>
<feature type="helix" evidence="10">
    <location>
        <begin position="313"/>
        <end position="316"/>
    </location>
</feature>
<feature type="helix" evidence="10">
    <location>
        <begin position="319"/>
        <end position="322"/>
    </location>
</feature>
<feature type="helix" evidence="10">
    <location>
        <begin position="326"/>
        <end position="328"/>
    </location>
</feature>
<feature type="helix" evidence="10">
    <location>
        <begin position="330"/>
        <end position="343"/>
    </location>
</feature>
<feature type="helix" evidence="10">
    <location>
        <begin position="346"/>
        <end position="349"/>
    </location>
</feature>
<feature type="helix" evidence="10">
    <location>
        <begin position="359"/>
        <end position="373"/>
    </location>
</feature>
<sequence length="549" mass="61415">MSSVLKAFERFTIEQELQDRGEEGSIPPETLKSAVKVFVINTPNPTTRYQMLNFCLRIICSQNARASHRVGALITLFSLPSAGMQNHIRLADRSPEAQIERCEIDGFEPGTYRLIPNARANLTANEIAAYALLADDLPPTINNGTPYVHADVEGQPCDEIEQFLDRCYSVLIQAWVMVCKCMTAYDQPAGSADRRFAKYQQQGRLEARYMLQPEAQRLIQTAIRKSLVVRQYLTFELQLARRQGLLSNRYYAMVGDIGKYIENSGLTAFFLTLKYALGTKWSPLSLAAFTGELTKLRSLMMLYRGLGEQARYLALLEAPQIMDFAPGGYPLIFSYAMGVGTVLDVQMRNYTYARPFLNGYYFQIGVETARRQQGTVDNRVADDLGLTPEQRTEVTQLVDRLARGRGAGIPGGPVNPFVPPVQQQQPAAVYEDIPALEESDDDGDEDGGAGFQNGVQLPAVRQGGQTDFRAQPLQDPIQAQLFMPLYPQVSNMPNNQNHQINRIGGLEHQDLLRYNENGDSQQDARGEHVNTFPNNPNQNAQLQVGDWDE</sequence>
<protein>
    <recommendedName>
        <fullName>Nucleoprotein</fullName>
    </recommendedName>
    <alternativeName>
        <fullName>Nucleocapsid protein</fullName>
        <shortName>NP</shortName>
        <shortName>Protein N</shortName>
    </alternativeName>
</protein>
<evidence type="ECO:0000250" key="1">
    <source>
        <dbReference type="UniProtKB" id="D5LWW7"/>
    </source>
</evidence>
<evidence type="ECO:0000250" key="2">
    <source>
        <dbReference type="UniProtKB" id="O57286"/>
    </source>
</evidence>
<evidence type="ECO:0000250" key="3">
    <source>
        <dbReference type="UniProtKB" id="P06159"/>
    </source>
</evidence>
<evidence type="ECO:0000250" key="4">
    <source>
        <dbReference type="UniProtKB" id="Q9DQA5"/>
    </source>
</evidence>
<evidence type="ECO:0000256" key="5">
    <source>
        <dbReference type="SAM" id="MobiDB-lite"/>
    </source>
</evidence>
<evidence type="ECO:0000269" key="6">
    <source>
    </source>
</evidence>
<evidence type="ECO:0000305" key="7"/>
<evidence type="ECO:0007744" key="8">
    <source>
        <dbReference type="PDB" id="7EWQ"/>
    </source>
</evidence>
<evidence type="ECO:0007744" key="9">
    <source>
        <dbReference type="PDB" id="7EXA"/>
    </source>
</evidence>
<evidence type="ECO:0007829" key="10">
    <source>
        <dbReference type="PDB" id="7EWQ"/>
    </source>
</evidence>
<gene>
    <name type="primary">N</name>
    <name type="synonym">NP</name>
</gene>